<gene>
    <name type="primary">ydfR</name>
    <name type="ordered locus">b1555</name>
    <name type="ordered locus">JW1547</name>
</gene>
<comment type="interaction">
    <interactant intactId="EBI-544071">
        <id>P76160</id>
    </interactant>
    <interactant intactId="EBI-549949">
        <id>P04805</id>
        <label>gltX</label>
    </interactant>
    <organismsDiffer>false</organismsDiffer>
    <experiments>2</experiments>
</comment>
<feature type="chain" id="PRO_0000168959" description="Uncharacterized protein YdfR">
    <location>
        <begin position="1"/>
        <end position="103"/>
    </location>
</feature>
<sequence>MTQDYELVVKGVRNFENKVTVTVALQDKERFDGEIFDLDVAMDRVEGAALEFYEAAARRSVRQVFLEVAEKLSEKVESYLQHQYSFKIENPANKHERPHHKYL</sequence>
<keyword id="KW-1185">Reference proteome</keyword>
<name>YDFR_ECOLI</name>
<dbReference type="EMBL" id="U00096">
    <property type="protein sequence ID" value="AAC74628.1"/>
    <property type="molecule type" value="Genomic_DNA"/>
</dbReference>
<dbReference type="EMBL" id="AP009048">
    <property type="protein sequence ID" value="BAE76470.1"/>
    <property type="molecule type" value="Genomic_DNA"/>
</dbReference>
<dbReference type="PIR" id="F64910">
    <property type="entry name" value="F64910"/>
</dbReference>
<dbReference type="RefSeq" id="NP_416073.1">
    <property type="nucleotide sequence ID" value="NC_000913.3"/>
</dbReference>
<dbReference type="RefSeq" id="WP_000189916.1">
    <property type="nucleotide sequence ID" value="NZ_SSUV01000066.1"/>
</dbReference>
<dbReference type="BioGRID" id="4259446">
    <property type="interactions" value="23"/>
</dbReference>
<dbReference type="DIP" id="DIP-11703N"/>
<dbReference type="FunCoup" id="P76160">
    <property type="interactions" value="58"/>
</dbReference>
<dbReference type="IntAct" id="P76160">
    <property type="interactions" value="4"/>
</dbReference>
<dbReference type="STRING" id="511145.b1555"/>
<dbReference type="PaxDb" id="511145-b1555"/>
<dbReference type="EnsemblBacteria" id="AAC74628">
    <property type="protein sequence ID" value="AAC74628"/>
    <property type="gene ID" value="b1555"/>
</dbReference>
<dbReference type="GeneID" id="946095"/>
<dbReference type="KEGG" id="ecj:JW1547"/>
<dbReference type="KEGG" id="eco:b1555"/>
<dbReference type="KEGG" id="ecoc:C3026_08975"/>
<dbReference type="PATRIC" id="fig|511145.12.peg.1626"/>
<dbReference type="EchoBASE" id="EB3591"/>
<dbReference type="HOGENOM" id="CLU_146603_2_0_6"/>
<dbReference type="InParanoid" id="P76160"/>
<dbReference type="OrthoDB" id="9914213at2"/>
<dbReference type="BioCyc" id="EcoCyc:G6828-MONOMER"/>
<dbReference type="PRO" id="PR:P76160"/>
<dbReference type="Proteomes" id="UP000000625">
    <property type="component" value="Chromosome"/>
</dbReference>
<dbReference type="InterPro" id="IPR009759">
    <property type="entry name" value="Phage_ES18_Gp24"/>
</dbReference>
<dbReference type="Pfam" id="PF07041">
    <property type="entry name" value="DUF1327"/>
    <property type="match status" value="1"/>
</dbReference>
<accession>P76160</accession>
<accession>Q2MB86</accession>
<protein>
    <recommendedName>
        <fullName>Uncharacterized protein YdfR</fullName>
    </recommendedName>
</protein>
<organism>
    <name type="scientific">Escherichia coli (strain K12)</name>
    <dbReference type="NCBI Taxonomy" id="83333"/>
    <lineage>
        <taxon>Bacteria</taxon>
        <taxon>Pseudomonadati</taxon>
        <taxon>Pseudomonadota</taxon>
        <taxon>Gammaproteobacteria</taxon>
        <taxon>Enterobacterales</taxon>
        <taxon>Enterobacteriaceae</taxon>
        <taxon>Escherichia</taxon>
    </lineage>
</organism>
<proteinExistence type="evidence at protein level"/>
<reference key="1">
    <citation type="journal article" date="1997" name="Science">
        <title>The complete genome sequence of Escherichia coli K-12.</title>
        <authorList>
            <person name="Blattner F.R."/>
            <person name="Plunkett G. III"/>
            <person name="Bloch C.A."/>
            <person name="Perna N.T."/>
            <person name="Burland V."/>
            <person name="Riley M."/>
            <person name="Collado-Vides J."/>
            <person name="Glasner J.D."/>
            <person name="Rode C.K."/>
            <person name="Mayhew G.F."/>
            <person name="Gregor J."/>
            <person name="Davis N.W."/>
            <person name="Kirkpatrick H.A."/>
            <person name="Goeden M.A."/>
            <person name="Rose D.J."/>
            <person name="Mau B."/>
            <person name="Shao Y."/>
        </authorList>
    </citation>
    <scope>NUCLEOTIDE SEQUENCE [LARGE SCALE GENOMIC DNA]</scope>
    <source>
        <strain>K12 / MG1655 / ATCC 47076</strain>
    </source>
</reference>
<reference key="2">
    <citation type="journal article" date="2006" name="Mol. Syst. Biol.">
        <title>Highly accurate genome sequences of Escherichia coli K-12 strains MG1655 and W3110.</title>
        <authorList>
            <person name="Hayashi K."/>
            <person name="Morooka N."/>
            <person name="Yamamoto Y."/>
            <person name="Fujita K."/>
            <person name="Isono K."/>
            <person name="Choi S."/>
            <person name="Ohtsubo E."/>
            <person name="Baba T."/>
            <person name="Wanner B.L."/>
            <person name="Mori H."/>
            <person name="Horiuchi T."/>
        </authorList>
    </citation>
    <scope>NUCLEOTIDE SEQUENCE [LARGE SCALE GENOMIC DNA]</scope>
    <source>
        <strain>K12 / W3110 / ATCC 27325 / DSM 5911</strain>
    </source>
</reference>